<proteinExistence type="inferred from homology"/>
<gene>
    <name evidence="1" type="primary">truA</name>
    <name type="ordered locus">SAR2302</name>
</gene>
<comment type="function">
    <text evidence="1">Formation of pseudouridine at positions 38, 39 and 40 in the anticodon stem and loop of transfer RNAs.</text>
</comment>
<comment type="catalytic activity">
    <reaction evidence="1">
        <text>uridine(38/39/40) in tRNA = pseudouridine(38/39/40) in tRNA</text>
        <dbReference type="Rhea" id="RHEA:22376"/>
        <dbReference type="Rhea" id="RHEA-COMP:10085"/>
        <dbReference type="Rhea" id="RHEA-COMP:10087"/>
        <dbReference type="ChEBI" id="CHEBI:65314"/>
        <dbReference type="ChEBI" id="CHEBI:65315"/>
        <dbReference type="EC" id="5.4.99.12"/>
    </reaction>
</comment>
<comment type="subunit">
    <text evidence="1">Homodimer.</text>
</comment>
<comment type="similarity">
    <text evidence="1">Belongs to the tRNA pseudouridine synthase TruA family.</text>
</comment>
<sequence>MRILVEIAYQGNNFLGFQIQQNGRTVQQQFEKLLQRIHKRHVRIHPSSRTDRGVHAIQQYFHFDTDLNIPMSQWQYAMNRTLPDDIYVNNVVTVDDDFHCRYDCVGKRYRYKVYQAQQRDPFQSGLKTFIPEPLDLDKMNRAAQQFIGTHDFTGFCSQKTEVESKVRTLYQSEIVKTDDGFDYIVTGSGFLYNMVRVLVAFLIEVGKGRHEVSDVPKLLESKNRKNVPFTAPAEGLYLEKIYLDENELLKDFGNDIKIHRKKSL</sequence>
<keyword id="KW-0413">Isomerase</keyword>
<keyword id="KW-0819">tRNA processing</keyword>
<name>TRUA_STAAR</name>
<feature type="chain" id="PRO_0000057452" description="tRNA pseudouridine synthase A">
    <location>
        <begin position="1"/>
        <end position="264"/>
    </location>
</feature>
<feature type="active site" description="Nucleophile" evidence="1">
    <location>
        <position position="51"/>
    </location>
</feature>
<feature type="binding site" evidence="1">
    <location>
        <position position="109"/>
    </location>
    <ligand>
        <name>substrate</name>
    </ligand>
</feature>
<reference key="1">
    <citation type="journal article" date="2004" name="Proc. Natl. Acad. Sci. U.S.A.">
        <title>Complete genomes of two clinical Staphylococcus aureus strains: evidence for the rapid evolution of virulence and drug resistance.</title>
        <authorList>
            <person name="Holden M.T.G."/>
            <person name="Feil E.J."/>
            <person name="Lindsay J.A."/>
            <person name="Peacock S.J."/>
            <person name="Day N.P.J."/>
            <person name="Enright M.C."/>
            <person name="Foster T.J."/>
            <person name="Moore C.E."/>
            <person name="Hurst L."/>
            <person name="Atkin R."/>
            <person name="Barron A."/>
            <person name="Bason N."/>
            <person name="Bentley S.D."/>
            <person name="Chillingworth C."/>
            <person name="Chillingworth T."/>
            <person name="Churcher C."/>
            <person name="Clark L."/>
            <person name="Corton C."/>
            <person name="Cronin A."/>
            <person name="Doggett J."/>
            <person name="Dowd L."/>
            <person name="Feltwell T."/>
            <person name="Hance Z."/>
            <person name="Harris B."/>
            <person name="Hauser H."/>
            <person name="Holroyd S."/>
            <person name="Jagels K."/>
            <person name="James K.D."/>
            <person name="Lennard N."/>
            <person name="Line A."/>
            <person name="Mayes R."/>
            <person name="Moule S."/>
            <person name="Mungall K."/>
            <person name="Ormond D."/>
            <person name="Quail M.A."/>
            <person name="Rabbinowitsch E."/>
            <person name="Rutherford K.M."/>
            <person name="Sanders M."/>
            <person name="Sharp S."/>
            <person name="Simmonds M."/>
            <person name="Stevens K."/>
            <person name="Whitehead S."/>
            <person name="Barrell B.G."/>
            <person name="Spratt B.G."/>
            <person name="Parkhill J."/>
        </authorList>
    </citation>
    <scope>NUCLEOTIDE SEQUENCE [LARGE SCALE GENOMIC DNA]</scope>
    <source>
        <strain>MRSA252</strain>
    </source>
</reference>
<accession>Q6GEL6</accession>
<dbReference type="EC" id="5.4.99.12" evidence="1"/>
<dbReference type="EMBL" id="BX571856">
    <property type="protein sequence ID" value="CAG41283.1"/>
    <property type="molecule type" value="Genomic_DNA"/>
</dbReference>
<dbReference type="RefSeq" id="WP_001221836.1">
    <property type="nucleotide sequence ID" value="NC_002952.2"/>
</dbReference>
<dbReference type="SMR" id="Q6GEL6"/>
<dbReference type="KEGG" id="sar:SAR2302"/>
<dbReference type="HOGENOM" id="CLU_014673_0_1_9"/>
<dbReference type="Proteomes" id="UP000000596">
    <property type="component" value="Chromosome"/>
</dbReference>
<dbReference type="GO" id="GO:0003723">
    <property type="term" value="F:RNA binding"/>
    <property type="evidence" value="ECO:0007669"/>
    <property type="project" value="InterPro"/>
</dbReference>
<dbReference type="GO" id="GO:0160147">
    <property type="term" value="F:tRNA pseudouridine(38-40) synthase activity"/>
    <property type="evidence" value="ECO:0007669"/>
    <property type="project" value="UniProtKB-EC"/>
</dbReference>
<dbReference type="GO" id="GO:0031119">
    <property type="term" value="P:tRNA pseudouridine synthesis"/>
    <property type="evidence" value="ECO:0007669"/>
    <property type="project" value="UniProtKB-UniRule"/>
</dbReference>
<dbReference type="CDD" id="cd02570">
    <property type="entry name" value="PseudoU_synth_EcTruA"/>
    <property type="match status" value="1"/>
</dbReference>
<dbReference type="FunFam" id="3.30.70.580:FF:000001">
    <property type="entry name" value="tRNA pseudouridine synthase A"/>
    <property type="match status" value="1"/>
</dbReference>
<dbReference type="Gene3D" id="3.30.70.660">
    <property type="entry name" value="Pseudouridine synthase I, catalytic domain, C-terminal subdomain"/>
    <property type="match status" value="1"/>
</dbReference>
<dbReference type="Gene3D" id="3.30.70.580">
    <property type="entry name" value="Pseudouridine synthase I, catalytic domain, N-terminal subdomain"/>
    <property type="match status" value="1"/>
</dbReference>
<dbReference type="HAMAP" id="MF_00171">
    <property type="entry name" value="TruA"/>
    <property type="match status" value="1"/>
</dbReference>
<dbReference type="InterPro" id="IPR020103">
    <property type="entry name" value="PsdUridine_synth_cat_dom_sf"/>
</dbReference>
<dbReference type="InterPro" id="IPR001406">
    <property type="entry name" value="PsdUridine_synth_TruA"/>
</dbReference>
<dbReference type="InterPro" id="IPR020097">
    <property type="entry name" value="PsdUridine_synth_TruA_a/b_dom"/>
</dbReference>
<dbReference type="InterPro" id="IPR020095">
    <property type="entry name" value="PsdUridine_synth_TruA_C"/>
</dbReference>
<dbReference type="InterPro" id="IPR020094">
    <property type="entry name" value="TruA/RsuA/RluB/E/F_N"/>
</dbReference>
<dbReference type="NCBIfam" id="TIGR00071">
    <property type="entry name" value="hisT_truA"/>
    <property type="match status" value="1"/>
</dbReference>
<dbReference type="PANTHER" id="PTHR11142">
    <property type="entry name" value="PSEUDOURIDYLATE SYNTHASE"/>
    <property type="match status" value="1"/>
</dbReference>
<dbReference type="PANTHER" id="PTHR11142:SF0">
    <property type="entry name" value="TRNA PSEUDOURIDINE SYNTHASE-LIKE 1"/>
    <property type="match status" value="1"/>
</dbReference>
<dbReference type="Pfam" id="PF01416">
    <property type="entry name" value="PseudoU_synth_1"/>
    <property type="match status" value="2"/>
</dbReference>
<dbReference type="PIRSF" id="PIRSF001430">
    <property type="entry name" value="tRNA_psdUrid_synth"/>
    <property type="match status" value="1"/>
</dbReference>
<dbReference type="SUPFAM" id="SSF55120">
    <property type="entry name" value="Pseudouridine synthase"/>
    <property type="match status" value="1"/>
</dbReference>
<organism>
    <name type="scientific">Staphylococcus aureus (strain MRSA252)</name>
    <dbReference type="NCBI Taxonomy" id="282458"/>
    <lineage>
        <taxon>Bacteria</taxon>
        <taxon>Bacillati</taxon>
        <taxon>Bacillota</taxon>
        <taxon>Bacilli</taxon>
        <taxon>Bacillales</taxon>
        <taxon>Staphylococcaceae</taxon>
        <taxon>Staphylococcus</taxon>
    </lineage>
</organism>
<evidence type="ECO:0000255" key="1">
    <source>
        <dbReference type="HAMAP-Rule" id="MF_00171"/>
    </source>
</evidence>
<protein>
    <recommendedName>
        <fullName evidence="1">tRNA pseudouridine synthase A</fullName>
        <ecNumber evidence="1">5.4.99.12</ecNumber>
    </recommendedName>
    <alternativeName>
        <fullName evidence="1">tRNA pseudouridine(38-40) synthase</fullName>
    </alternativeName>
    <alternativeName>
        <fullName evidence="1">tRNA pseudouridylate synthase I</fullName>
    </alternativeName>
    <alternativeName>
        <fullName evidence="1">tRNA-uridine isomerase I</fullName>
    </alternativeName>
</protein>